<feature type="chain" id="PRO_0000201758" description="Transcriptional repressor IclR">
    <location>
        <begin position="1"/>
        <end position="274"/>
    </location>
</feature>
<feature type="domain" description="HTH iclR-type" evidence="1">
    <location>
        <begin position="24"/>
        <end position="86"/>
    </location>
</feature>
<feature type="domain" description="IclR-ED" evidence="2">
    <location>
        <begin position="101"/>
        <end position="272"/>
    </location>
</feature>
<feature type="DNA-binding region" description="H-T-H motif" evidence="1">
    <location>
        <begin position="46"/>
        <end position="65"/>
    </location>
</feature>
<feature type="binding site">
    <location>
        <begin position="160"/>
        <end position="161"/>
    </location>
    <ligand>
        <name>glyoxylate</name>
        <dbReference type="ChEBI" id="CHEBI:36655"/>
    </ligand>
</feature>
<feature type="binding site">
    <location>
        <position position="212"/>
    </location>
    <ligand>
        <name>glyoxylate</name>
        <dbReference type="ChEBI" id="CHEBI:36655"/>
    </ligand>
</feature>
<feature type="binding site">
    <location>
        <position position="222"/>
    </location>
    <ligand>
        <name>glyoxylate</name>
        <dbReference type="ChEBI" id="CHEBI:36655"/>
    </ligand>
</feature>
<feature type="binding site">
    <location>
        <begin position="239"/>
        <end position="241"/>
    </location>
    <ligand>
        <name>glyoxylate</name>
        <dbReference type="ChEBI" id="CHEBI:36655"/>
    </ligand>
</feature>
<feature type="mutagenesis site" description="Strongly reduced promoter binding and tetramerization." evidence="3">
    <original>L</original>
    <variation>D</variation>
    <location>
        <position position="143"/>
    </location>
</feature>
<feature type="mutagenesis site" description="Strongly reduced promoter binding and tetramerization." evidence="3">
    <original>M</original>
    <variation>D</variation>
    <location>
        <position position="146"/>
    </location>
</feature>
<feature type="mutagenesis site" description="Strongly reduced promoter binding and tetramerization." evidence="3">
    <original>L</original>
    <variation>D</variation>
    <location>
        <position position="154"/>
    </location>
</feature>
<feature type="mutagenesis site" description="Loss of promoter binding and tetramerization." evidence="3">
    <original>L</original>
    <variation>D</variation>
    <location>
        <position position="220"/>
    </location>
</feature>
<feature type="helix" evidence="6">
    <location>
        <begin position="99"/>
        <end position="116"/>
    </location>
</feature>
<feature type="strand" evidence="6">
    <location>
        <begin position="118"/>
        <end position="126"/>
    </location>
</feature>
<feature type="turn" evidence="6">
    <location>
        <begin position="127"/>
        <end position="130"/>
    </location>
</feature>
<feature type="strand" evidence="6">
    <location>
        <begin position="131"/>
        <end position="138"/>
    </location>
</feature>
<feature type="strand" evidence="6">
    <location>
        <begin position="143"/>
        <end position="146"/>
    </location>
</feature>
<feature type="strand" evidence="6">
    <location>
        <begin position="156"/>
        <end position="159"/>
    </location>
</feature>
<feature type="helix" evidence="6">
    <location>
        <begin position="160"/>
        <end position="166"/>
    </location>
</feature>
<feature type="helix" evidence="6">
    <location>
        <begin position="171"/>
        <end position="175"/>
    </location>
</feature>
<feature type="helix" evidence="6">
    <location>
        <begin position="177"/>
        <end position="180"/>
    </location>
</feature>
<feature type="helix" evidence="6">
    <location>
        <begin position="194"/>
        <end position="207"/>
    </location>
</feature>
<feature type="strand" evidence="6">
    <location>
        <begin position="209"/>
        <end position="217"/>
    </location>
</feature>
<feature type="strand" evidence="6">
    <location>
        <begin position="220"/>
        <end position="228"/>
    </location>
</feature>
<feature type="strand" evidence="5">
    <location>
        <begin position="230"/>
        <end position="232"/>
    </location>
</feature>
<feature type="strand" evidence="6">
    <location>
        <begin position="234"/>
        <end position="243"/>
    </location>
</feature>
<feature type="turn" evidence="6">
    <location>
        <begin position="244"/>
        <end position="246"/>
    </location>
</feature>
<feature type="helix" evidence="6">
    <location>
        <begin position="249"/>
        <end position="251"/>
    </location>
</feature>
<feature type="helix" evidence="6">
    <location>
        <begin position="252"/>
        <end position="273"/>
    </location>
</feature>
<proteinExistence type="evidence at protein level"/>
<accession>P16528</accession>
<accession>P76782</accession>
<accession>Q2M6T6</accession>
<sequence length="274" mass="29739">MVAPIPAKRGRKPAVATAPATGQVQSLTRGLKLLEWIAESNGSVALTELAQQAGLPNSTTHRLLTTMQQQGFVRQVGELGHWAIGAHAFMVGSSFLQSRNLLAIVHPILRNLMEESGETVNMAVLDQSDHEAIIIDQVQCTHLMRMSAPIGGKLPMHASGAGKAFLAQLSEEQVTKLLHRKGLHAYTHATLVSPVHLKEDLAQTRKRGYSFDDEEHALGLRCLAACIFDEHREPFAAISISGPISRITDDRVTEFGAMVIKAAKEVTLAYGGMR</sequence>
<protein>
    <recommendedName>
        <fullName evidence="4">Transcriptional repressor IclR</fullName>
        <shortName>Acetate operon repressor</shortName>
    </recommendedName>
</protein>
<gene>
    <name type="primary">iclR</name>
    <name type="ordered locus">b4018</name>
    <name type="ordered locus">JW3978</name>
</gene>
<dbReference type="EMBL" id="M31761">
    <property type="protein sequence ID" value="AAA24008.1"/>
    <property type="molecule type" value="Genomic_DNA"/>
</dbReference>
<dbReference type="EMBL" id="M63914">
    <property type="protein sequence ID" value="AAA50561.1"/>
    <property type="status" value="ALT_INIT"/>
    <property type="molecule type" value="Genomic_DNA"/>
</dbReference>
<dbReference type="EMBL" id="U00006">
    <property type="protein sequence ID" value="AAC43112.1"/>
    <property type="status" value="ALT_INIT"/>
    <property type="molecule type" value="Genomic_DNA"/>
</dbReference>
<dbReference type="EMBL" id="U00096">
    <property type="protein sequence ID" value="AAC76988.2"/>
    <property type="molecule type" value="Genomic_DNA"/>
</dbReference>
<dbReference type="EMBL" id="AP009048">
    <property type="protein sequence ID" value="BAE78020.1"/>
    <property type="molecule type" value="Genomic_DNA"/>
</dbReference>
<dbReference type="EMBL" id="M63497">
    <property type="protein sequence ID" value="AAA73003.1"/>
    <property type="molecule type" value="Genomic_DNA"/>
</dbReference>
<dbReference type="RefSeq" id="NP_418442.2">
    <property type="nucleotide sequence ID" value="NC_000913.3"/>
</dbReference>
<dbReference type="RefSeq" id="WP_000226403.1">
    <property type="nucleotide sequence ID" value="NZ_STEB01000022.1"/>
</dbReference>
<dbReference type="PDB" id="1TD5">
    <property type="method" value="X-ray"/>
    <property type="resolution" value="2.30 A"/>
    <property type="chains" value="A/B/C/D=98-274"/>
</dbReference>
<dbReference type="PDB" id="2O99">
    <property type="method" value="X-ray"/>
    <property type="resolution" value="1.70 A"/>
    <property type="chains" value="A/B/C/D=98-274"/>
</dbReference>
<dbReference type="PDB" id="2O9A">
    <property type="method" value="X-ray"/>
    <property type="resolution" value="1.80 A"/>
    <property type="chains" value="A/B/C/D=98-274"/>
</dbReference>
<dbReference type="PDBsum" id="1TD5"/>
<dbReference type="PDBsum" id="2O99"/>
<dbReference type="PDBsum" id="2O9A"/>
<dbReference type="SMR" id="P16528"/>
<dbReference type="BioGRID" id="4263460">
    <property type="interactions" value="99"/>
</dbReference>
<dbReference type="DIP" id="DIP-10008N"/>
<dbReference type="FunCoup" id="P16528">
    <property type="interactions" value="77"/>
</dbReference>
<dbReference type="IntAct" id="P16528">
    <property type="interactions" value="17"/>
</dbReference>
<dbReference type="MINT" id="P16528"/>
<dbReference type="STRING" id="511145.b4018"/>
<dbReference type="PaxDb" id="511145-b4018"/>
<dbReference type="EnsemblBacteria" id="AAC76988">
    <property type="protein sequence ID" value="AAC76988"/>
    <property type="gene ID" value="b4018"/>
</dbReference>
<dbReference type="GeneID" id="93777877"/>
<dbReference type="GeneID" id="948524"/>
<dbReference type="KEGG" id="ecj:JW3978"/>
<dbReference type="KEGG" id="eco:b4018"/>
<dbReference type="KEGG" id="ecoc:C3026_21705"/>
<dbReference type="PATRIC" id="fig|1411691.4.peg.2695"/>
<dbReference type="EchoBASE" id="EB0486"/>
<dbReference type="eggNOG" id="COG1414">
    <property type="taxonomic scope" value="Bacteria"/>
</dbReference>
<dbReference type="HOGENOM" id="CLU_062618_7_1_6"/>
<dbReference type="InParanoid" id="P16528"/>
<dbReference type="OMA" id="NALMRMS"/>
<dbReference type="OrthoDB" id="9807558at2"/>
<dbReference type="PhylomeDB" id="P16528"/>
<dbReference type="BioCyc" id="EcoCyc:PD04099"/>
<dbReference type="EvolutionaryTrace" id="P16528"/>
<dbReference type="PRO" id="PR:P16528"/>
<dbReference type="Proteomes" id="UP000000625">
    <property type="component" value="Chromosome"/>
</dbReference>
<dbReference type="GO" id="GO:0005829">
    <property type="term" value="C:cytosol"/>
    <property type="evidence" value="ECO:0000314"/>
    <property type="project" value="EcoCyc"/>
</dbReference>
<dbReference type="GO" id="GO:0003677">
    <property type="term" value="F:DNA binding"/>
    <property type="evidence" value="ECO:0000318"/>
    <property type="project" value="GO_Central"/>
</dbReference>
<dbReference type="GO" id="GO:0003700">
    <property type="term" value="F:DNA-binding transcription factor activity"/>
    <property type="evidence" value="ECO:0000318"/>
    <property type="project" value="GO_Central"/>
</dbReference>
<dbReference type="GO" id="GO:0006097">
    <property type="term" value="P:glyoxylate cycle"/>
    <property type="evidence" value="ECO:0007669"/>
    <property type="project" value="UniProtKB-KW"/>
</dbReference>
<dbReference type="GO" id="GO:0045892">
    <property type="term" value="P:negative regulation of DNA-templated transcription"/>
    <property type="evidence" value="ECO:0000318"/>
    <property type="project" value="GO_Central"/>
</dbReference>
<dbReference type="GO" id="GO:0006355">
    <property type="term" value="P:regulation of DNA-templated transcription"/>
    <property type="evidence" value="ECO:0000315"/>
    <property type="project" value="EcoCyc"/>
</dbReference>
<dbReference type="FunFam" id="1.10.10.10:FF:000155">
    <property type="entry name" value="Acetate operon repressor IclR"/>
    <property type="match status" value="1"/>
</dbReference>
<dbReference type="FunFam" id="3.30.450.40:FF:000020">
    <property type="entry name" value="Acetate operon transcriptional repressor IclR"/>
    <property type="match status" value="1"/>
</dbReference>
<dbReference type="Gene3D" id="3.30.450.40">
    <property type="match status" value="1"/>
</dbReference>
<dbReference type="Gene3D" id="1.10.10.10">
    <property type="entry name" value="Winged helix-like DNA-binding domain superfamily/Winged helix DNA-binding domain"/>
    <property type="match status" value="1"/>
</dbReference>
<dbReference type="InterPro" id="IPR029016">
    <property type="entry name" value="GAF-like_dom_sf"/>
</dbReference>
<dbReference type="InterPro" id="IPR050707">
    <property type="entry name" value="HTH_MetabolicPath_Reg"/>
</dbReference>
<dbReference type="InterPro" id="IPR014757">
    <property type="entry name" value="Tscrpt_reg_IclR_C"/>
</dbReference>
<dbReference type="InterPro" id="IPR005471">
    <property type="entry name" value="Tscrpt_reg_IclR_N"/>
</dbReference>
<dbReference type="InterPro" id="IPR036388">
    <property type="entry name" value="WH-like_DNA-bd_sf"/>
</dbReference>
<dbReference type="InterPro" id="IPR036390">
    <property type="entry name" value="WH_DNA-bd_sf"/>
</dbReference>
<dbReference type="NCBIfam" id="NF008601">
    <property type="entry name" value="PRK11569.1"/>
    <property type="match status" value="1"/>
</dbReference>
<dbReference type="PANTHER" id="PTHR30136">
    <property type="entry name" value="HELIX-TURN-HELIX TRANSCRIPTIONAL REGULATOR, ICLR FAMILY"/>
    <property type="match status" value="1"/>
</dbReference>
<dbReference type="PANTHER" id="PTHR30136:SF22">
    <property type="entry name" value="TRANSCRIPTIONAL REPRESSOR ICLR"/>
    <property type="match status" value="1"/>
</dbReference>
<dbReference type="Pfam" id="PF09339">
    <property type="entry name" value="HTH_IclR"/>
    <property type="match status" value="1"/>
</dbReference>
<dbReference type="Pfam" id="PF01614">
    <property type="entry name" value="IclR_C"/>
    <property type="match status" value="1"/>
</dbReference>
<dbReference type="SMART" id="SM00346">
    <property type="entry name" value="HTH_ICLR"/>
    <property type="match status" value="1"/>
</dbReference>
<dbReference type="SUPFAM" id="SSF55781">
    <property type="entry name" value="GAF domain-like"/>
    <property type="match status" value="1"/>
</dbReference>
<dbReference type="SUPFAM" id="SSF46785">
    <property type="entry name" value="Winged helix' DNA-binding domain"/>
    <property type="match status" value="1"/>
</dbReference>
<dbReference type="PROSITE" id="PS51077">
    <property type="entry name" value="HTH_ICLR"/>
    <property type="match status" value="1"/>
</dbReference>
<dbReference type="PROSITE" id="PS51078">
    <property type="entry name" value="ICLR_ED"/>
    <property type="match status" value="1"/>
</dbReference>
<name>ICLR_ECOLI</name>
<comment type="function">
    <text>Regulation of the glyoxylate bypass operon (aceBAK), which encodes isocitrate lyase, malate synthase as well as isocitrate dehydrogenase kinase/phosphorylase. Glyoxylate disrupts the interaction with the promoter by favoring the inactive dimeric form. Pyruvate enhances promoter binding by stabilizing the tetrameric form.</text>
</comment>
<comment type="subunit">
    <text evidence="3">Homotetramer and homodimer. Homotetramer in its active, DNA-bound form. Homodimer in its inactive form.</text>
</comment>
<comment type="interaction">
    <interactant intactId="EBI-552904">
        <id>P16528</id>
    </interactant>
    <interactant intactId="EBI-543760">
        <id>P67910</id>
        <label>hldD</label>
    </interactant>
    <organismsDiffer>false</organismsDiffer>
    <experiments>2</experiments>
</comment>
<comment type="miscellaneous">
    <text>Glyoxylate and pyruvate occupy the same site.</text>
</comment>
<comment type="sequence caution" evidence="4">
    <conflict type="erroneous initiation">
        <sequence resource="EMBL-CDS" id="AAA50561"/>
    </conflict>
    <text>Extended N-terminus.</text>
</comment>
<comment type="sequence caution" evidence="4">
    <conflict type="erroneous initiation">
        <sequence resource="EMBL-CDS" id="AAC43112"/>
    </conflict>
    <text>Extended N-terminus.</text>
</comment>
<reference key="1">
    <citation type="journal article" date="1990" name="J. Bacteriol.">
        <title>Regulation of the glyoxylate bypass operon: cloning and characterization of iclR.</title>
        <authorList>
            <person name="Sunnarborg A."/>
            <person name="Klumpp D.J."/>
            <person name="Chung T."/>
            <person name="Laporte D.C."/>
        </authorList>
    </citation>
    <scope>NUCLEOTIDE SEQUENCE [GENOMIC DNA]</scope>
</reference>
<reference key="2">
    <citation type="journal article" date="1991" name="Gene">
        <title>Overproduction and characterization of the iclR gene product of Escherichia coli K-12 and comparison with that of Salmonella typhimurium LT2.</title>
        <authorList>
            <person name="Negre D."/>
            <person name="Cortay J.-C."/>
            <person name="Old I.G."/>
            <person name="Galinier A."/>
            <person name="Richaud C."/>
            <person name="Saint-Girons I."/>
            <person name="Cozzone A.J."/>
        </authorList>
    </citation>
    <scope>NUCLEOTIDE SEQUENCE [GENOMIC DNA]</scope>
    <source>
        <strain>K12</strain>
    </source>
</reference>
<reference key="3">
    <citation type="journal article" date="1993" name="Nucleic Acids Res.">
        <title>Analysis of the Escherichia coli genome. IV. DNA sequence of the region from 89.2 to 92.8 minutes.</title>
        <authorList>
            <person name="Blattner F.R."/>
            <person name="Burland V.D."/>
            <person name="Plunkett G. III"/>
            <person name="Sofia H.J."/>
            <person name="Daniels D.L."/>
        </authorList>
    </citation>
    <scope>NUCLEOTIDE SEQUENCE [LARGE SCALE GENOMIC DNA]</scope>
    <source>
        <strain>K12 / MG1655 / ATCC 47076</strain>
    </source>
</reference>
<reference key="4">
    <citation type="journal article" date="1997" name="Science">
        <title>The complete genome sequence of Escherichia coli K-12.</title>
        <authorList>
            <person name="Blattner F.R."/>
            <person name="Plunkett G. III"/>
            <person name="Bloch C.A."/>
            <person name="Perna N.T."/>
            <person name="Burland V."/>
            <person name="Riley M."/>
            <person name="Collado-Vides J."/>
            <person name="Glasner J.D."/>
            <person name="Rode C.K."/>
            <person name="Mayhew G.F."/>
            <person name="Gregor J."/>
            <person name="Davis N.W."/>
            <person name="Kirkpatrick H.A."/>
            <person name="Goeden M.A."/>
            <person name="Rose D.J."/>
            <person name="Mau B."/>
            <person name="Shao Y."/>
        </authorList>
    </citation>
    <scope>NUCLEOTIDE SEQUENCE [LARGE SCALE GENOMIC DNA]</scope>
    <source>
        <strain>K12 / MG1655 / ATCC 47076</strain>
    </source>
</reference>
<reference key="5">
    <citation type="journal article" date="2006" name="Mol. Syst. Biol.">
        <title>Highly accurate genome sequences of Escherichia coli K-12 strains MG1655 and W3110.</title>
        <authorList>
            <person name="Hayashi K."/>
            <person name="Morooka N."/>
            <person name="Yamamoto Y."/>
            <person name="Fujita K."/>
            <person name="Isono K."/>
            <person name="Choi S."/>
            <person name="Ohtsubo E."/>
            <person name="Baba T."/>
            <person name="Wanner B.L."/>
            <person name="Mori H."/>
            <person name="Horiuchi T."/>
        </authorList>
    </citation>
    <scope>NUCLEOTIDE SEQUENCE [LARGE SCALE GENOMIC DNA]</scope>
    <source>
        <strain>K12 / W3110 / ATCC 27325 / DSM 5911</strain>
    </source>
</reference>
<reference key="6">
    <citation type="journal article" date="1991" name="Gene">
        <title>Primary structure of the intergenic region between aceK and iclR in the Escherichia coli chromosome.</title>
        <authorList>
            <person name="Galinier A."/>
            <person name="Bleicher F."/>
            <person name="Negre D."/>
            <person name="Perriere G."/>
            <person name="Duclos B."/>
            <person name="Cozzone A.J."/>
            <person name="Cortay J.-C."/>
        </authorList>
    </citation>
    <scope>NUCLEOTIDE SEQUENCE [GENOMIC DNA] OF 262-274</scope>
</reference>
<reference key="7">
    <citation type="journal article" date="2007" name="J. Biol. Chem.">
        <title>Glyoxylate and pyruvate are antagonistic effectors of the Escherichia coli IclR transcriptional regulator.</title>
        <authorList>
            <person name="Lorca G.L."/>
            <person name="Ezersky A."/>
            <person name="Lunin V.V."/>
            <person name="Walker J.R."/>
            <person name="Altamentova S."/>
            <person name="Evdokimova E."/>
            <person name="Vedadi M."/>
            <person name="Bochkarev A."/>
            <person name="Savchenko A."/>
        </authorList>
    </citation>
    <scope>X-RAY CRYSTALLOGRAPHY (1.7 ANGSTROMS) OF 98-274 IN COMPLEXES WITH PYRUVATE AND GLYOXYLATE</scope>
    <scope>SUBUNIT</scope>
    <scope>MUTAGENESIS OF LEU-143; MET-146; LEU-154 AND LEU-220</scope>
</reference>
<reference key="8">
    <citation type="submission" date="2005-01" db="PDB data bank">
        <title>Crystal structure analysis of the E. coli glyoxylate regulatory protein ligand binding domain.</title>
        <authorList>
            <person name="Walker J.R."/>
            <person name="Skarina T."/>
            <person name="Kudrytska M."/>
            <person name="Arrowsmith C."/>
            <person name="Edwards A."/>
            <person name="Savchenko A."/>
        </authorList>
    </citation>
    <scope>X-RAY CRYSTALLOGRAPHY (2.30 ANGSTROMS) OF 98-274</scope>
</reference>
<keyword id="KW-0002">3D-structure</keyword>
<keyword id="KW-0238">DNA-binding</keyword>
<keyword id="KW-0329">Glyoxylate bypass</keyword>
<keyword id="KW-1185">Reference proteome</keyword>
<keyword id="KW-0678">Repressor</keyword>
<keyword id="KW-0804">Transcription</keyword>
<keyword id="KW-0805">Transcription regulation</keyword>
<organism>
    <name type="scientific">Escherichia coli (strain K12)</name>
    <dbReference type="NCBI Taxonomy" id="83333"/>
    <lineage>
        <taxon>Bacteria</taxon>
        <taxon>Pseudomonadati</taxon>
        <taxon>Pseudomonadota</taxon>
        <taxon>Gammaproteobacteria</taxon>
        <taxon>Enterobacterales</taxon>
        <taxon>Enterobacteriaceae</taxon>
        <taxon>Escherichia</taxon>
    </lineage>
</organism>
<evidence type="ECO:0000255" key="1">
    <source>
        <dbReference type="PROSITE-ProRule" id="PRU00393"/>
    </source>
</evidence>
<evidence type="ECO:0000255" key="2">
    <source>
        <dbReference type="PROSITE-ProRule" id="PRU00394"/>
    </source>
</evidence>
<evidence type="ECO:0000269" key="3">
    <source>
    </source>
</evidence>
<evidence type="ECO:0000305" key="4"/>
<evidence type="ECO:0007829" key="5">
    <source>
        <dbReference type="PDB" id="1TD5"/>
    </source>
</evidence>
<evidence type="ECO:0007829" key="6">
    <source>
        <dbReference type="PDB" id="2O99"/>
    </source>
</evidence>